<accession>A2C6Q1</accession>
<feature type="chain" id="PRO_0000316359" description="Photosystem II protein D1" evidence="1">
    <location>
        <begin position="1"/>
        <end position="343"/>
    </location>
</feature>
<feature type="propeptide" id="PRO_0000316360" evidence="1">
    <location>
        <begin position="344"/>
        <end position="358"/>
    </location>
</feature>
<feature type="transmembrane region" description="Helical" evidence="1">
    <location>
        <begin position="28"/>
        <end position="45"/>
    </location>
</feature>
<feature type="transmembrane region" description="Helical" evidence="1">
    <location>
        <begin position="117"/>
        <end position="132"/>
    </location>
</feature>
<feature type="transmembrane region" description="Helical" evidence="1">
    <location>
        <begin position="141"/>
        <end position="155"/>
    </location>
</feature>
<feature type="transmembrane region" description="Helical" evidence="1">
    <location>
        <begin position="196"/>
        <end position="217"/>
    </location>
</feature>
<feature type="transmembrane region" description="Helical" evidence="1">
    <location>
        <begin position="273"/>
        <end position="287"/>
    </location>
</feature>
<feature type="binding site" description="axial binding residue" evidence="1">
    <location>
        <position position="117"/>
    </location>
    <ligand>
        <name>chlorophyll a</name>
        <dbReference type="ChEBI" id="CHEBI:58416"/>
        <label>ChlzD1</label>
    </ligand>
    <ligandPart>
        <name>Mg</name>
        <dbReference type="ChEBI" id="CHEBI:25107"/>
    </ligandPart>
</feature>
<feature type="binding site" evidence="1">
    <location>
        <position position="125"/>
    </location>
    <ligand>
        <name>pheophytin a</name>
        <dbReference type="ChEBI" id="CHEBI:136840"/>
        <label>D1</label>
    </ligand>
</feature>
<feature type="binding site" evidence="1">
    <location>
        <position position="169"/>
    </location>
    <ligand>
        <name>[CaMn4O5] cluster</name>
        <dbReference type="ChEBI" id="CHEBI:189552"/>
    </ligand>
</feature>
<feature type="binding site" evidence="1">
    <location>
        <position position="188"/>
    </location>
    <ligand>
        <name>[CaMn4O5] cluster</name>
        <dbReference type="ChEBI" id="CHEBI:189552"/>
    </ligand>
</feature>
<feature type="binding site" description="axial binding residue" evidence="1">
    <location>
        <position position="197"/>
    </location>
    <ligand>
        <name>chlorophyll a</name>
        <dbReference type="ChEBI" id="CHEBI:58416"/>
        <label>PD1</label>
    </ligand>
    <ligandPart>
        <name>Mg</name>
        <dbReference type="ChEBI" id="CHEBI:25107"/>
    </ligandPart>
</feature>
<feature type="binding site" evidence="1">
    <location>
        <position position="214"/>
    </location>
    <ligand>
        <name>a quinone</name>
        <dbReference type="ChEBI" id="CHEBI:132124"/>
        <label>B</label>
    </ligand>
</feature>
<feature type="binding site" evidence="1">
    <location>
        <position position="214"/>
    </location>
    <ligand>
        <name>Fe cation</name>
        <dbReference type="ChEBI" id="CHEBI:24875"/>
        <note>ligand shared with heterodimeric partner</note>
    </ligand>
</feature>
<feature type="binding site" evidence="1">
    <location>
        <begin position="263"/>
        <end position="264"/>
    </location>
    <ligand>
        <name>a quinone</name>
        <dbReference type="ChEBI" id="CHEBI:132124"/>
        <label>B</label>
    </ligand>
</feature>
<feature type="binding site" evidence="1">
    <location>
        <position position="271"/>
    </location>
    <ligand>
        <name>Fe cation</name>
        <dbReference type="ChEBI" id="CHEBI:24875"/>
        <note>ligand shared with heterodimeric partner</note>
    </ligand>
</feature>
<feature type="binding site" evidence="1">
    <location>
        <position position="331"/>
    </location>
    <ligand>
        <name>[CaMn4O5] cluster</name>
        <dbReference type="ChEBI" id="CHEBI:189552"/>
    </ligand>
</feature>
<feature type="binding site" evidence="1">
    <location>
        <position position="332"/>
    </location>
    <ligand>
        <name>[CaMn4O5] cluster</name>
        <dbReference type="ChEBI" id="CHEBI:189552"/>
    </ligand>
</feature>
<feature type="binding site" evidence="1">
    <location>
        <position position="341"/>
    </location>
    <ligand>
        <name>[CaMn4O5] cluster</name>
        <dbReference type="ChEBI" id="CHEBI:189552"/>
    </ligand>
</feature>
<feature type="binding site" evidence="1">
    <location>
        <position position="343"/>
    </location>
    <ligand>
        <name>[CaMn4O5] cluster</name>
        <dbReference type="ChEBI" id="CHEBI:189552"/>
    </ligand>
</feature>
<feature type="site" description="Tyrosine radical intermediate" evidence="1">
    <location>
        <position position="160"/>
    </location>
</feature>
<feature type="site" description="Stabilizes free radical intermediate" evidence="1">
    <location>
        <position position="189"/>
    </location>
</feature>
<feature type="site" description="Cleavage; by CtpA" evidence="1">
    <location>
        <begin position="343"/>
        <end position="344"/>
    </location>
</feature>
<reference key="1">
    <citation type="journal article" date="2007" name="PLoS Genet.">
        <title>Patterns and implications of gene gain and loss in the evolution of Prochlorococcus.</title>
        <authorList>
            <person name="Kettler G.C."/>
            <person name="Martiny A.C."/>
            <person name="Huang K."/>
            <person name="Zucker J."/>
            <person name="Coleman M.L."/>
            <person name="Rodrigue S."/>
            <person name="Chen F."/>
            <person name="Lapidus A."/>
            <person name="Ferriera S."/>
            <person name="Johnson J."/>
            <person name="Steglich C."/>
            <person name="Church G.M."/>
            <person name="Richardson P."/>
            <person name="Chisholm S.W."/>
        </authorList>
    </citation>
    <scope>NUCLEOTIDE SEQUENCE [LARGE SCALE GENOMIC DNA]</scope>
    <source>
        <strain>MIT 9303</strain>
    </source>
</reference>
<protein>
    <recommendedName>
        <fullName evidence="1">Photosystem II protein D1</fullName>
        <shortName evidence="1">PSII D1 protein</shortName>
        <ecNumber evidence="1">1.10.3.9</ecNumber>
    </recommendedName>
    <alternativeName>
        <fullName evidence="1">Photosystem II Q(B) protein</fullName>
    </alternativeName>
</protein>
<dbReference type="EC" id="1.10.3.9" evidence="1"/>
<dbReference type="EMBL" id="CP000554">
    <property type="protein sequence ID" value="ABM77161.1"/>
    <property type="molecule type" value="Genomic_DNA"/>
</dbReference>
<dbReference type="EMBL" id="CP000554">
    <property type="protein sequence ID" value="ABM78610.1"/>
    <property type="molecule type" value="Genomic_DNA"/>
</dbReference>
<dbReference type="RefSeq" id="WP_011825086.1">
    <property type="nucleotide sequence ID" value="NC_008820.1"/>
</dbReference>
<dbReference type="SMR" id="A2C6Q1"/>
<dbReference type="STRING" id="59922.P9303_04091"/>
<dbReference type="KEGG" id="pmf:P9303_04091"/>
<dbReference type="KEGG" id="pmf:P9303_18681"/>
<dbReference type="HOGENOM" id="CLU_054206_1_0_3"/>
<dbReference type="BioCyc" id="PMAR59922:G1G80-1619-MONOMER"/>
<dbReference type="BioCyc" id="PMAR59922:G1G80-380-MONOMER"/>
<dbReference type="Proteomes" id="UP000002274">
    <property type="component" value="Chromosome"/>
</dbReference>
<dbReference type="GO" id="GO:0009523">
    <property type="term" value="C:photosystem II"/>
    <property type="evidence" value="ECO:0007669"/>
    <property type="project" value="UniProtKB-KW"/>
</dbReference>
<dbReference type="GO" id="GO:0031676">
    <property type="term" value="C:plasma membrane-derived thylakoid membrane"/>
    <property type="evidence" value="ECO:0007669"/>
    <property type="project" value="UniProtKB-SubCell"/>
</dbReference>
<dbReference type="GO" id="GO:0016168">
    <property type="term" value="F:chlorophyll binding"/>
    <property type="evidence" value="ECO:0007669"/>
    <property type="project" value="UniProtKB-UniRule"/>
</dbReference>
<dbReference type="GO" id="GO:0045156">
    <property type="term" value="F:electron transporter, transferring electrons within the cyclic electron transport pathway of photosynthesis activity"/>
    <property type="evidence" value="ECO:0007669"/>
    <property type="project" value="InterPro"/>
</dbReference>
<dbReference type="GO" id="GO:0005506">
    <property type="term" value="F:iron ion binding"/>
    <property type="evidence" value="ECO:0007669"/>
    <property type="project" value="UniProtKB-UniRule"/>
</dbReference>
<dbReference type="GO" id="GO:0016682">
    <property type="term" value="F:oxidoreductase activity, acting on diphenols and related substances as donors, oxygen as acceptor"/>
    <property type="evidence" value="ECO:0007669"/>
    <property type="project" value="UniProtKB-UniRule"/>
</dbReference>
<dbReference type="GO" id="GO:0010242">
    <property type="term" value="F:oxygen evolving activity"/>
    <property type="evidence" value="ECO:0007669"/>
    <property type="project" value="UniProtKB-EC"/>
</dbReference>
<dbReference type="GO" id="GO:0009772">
    <property type="term" value="P:photosynthetic electron transport in photosystem II"/>
    <property type="evidence" value="ECO:0007669"/>
    <property type="project" value="InterPro"/>
</dbReference>
<dbReference type="GO" id="GO:0009635">
    <property type="term" value="P:response to herbicide"/>
    <property type="evidence" value="ECO:0007669"/>
    <property type="project" value="UniProtKB-KW"/>
</dbReference>
<dbReference type="CDD" id="cd09289">
    <property type="entry name" value="Photosystem-II_D1"/>
    <property type="match status" value="1"/>
</dbReference>
<dbReference type="FunFam" id="1.20.85.10:FF:000002">
    <property type="entry name" value="Photosystem II protein D1"/>
    <property type="match status" value="1"/>
</dbReference>
<dbReference type="Gene3D" id="1.20.85.10">
    <property type="entry name" value="Photosystem II protein D1-like"/>
    <property type="match status" value="2"/>
</dbReference>
<dbReference type="HAMAP" id="MF_01379">
    <property type="entry name" value="PSII_PsbA_D1"/>
    <property type="match status" value="1"/>
</dbReference>
<dbReference type="InterPro" id="IPR055266">
    <property type="entry name" value="D1/D2"/>
</dbReference>
<dbReference type="InterPro" id="IPR036854">
    <property type="entry name" value="Photo_II_D1/D2_sf"/>
</dbReference>
<dbReference type="InterPro" id="IPR000484">
    <property type="entry name" value="Photo_RC_L/M"/>
</dbReference>
<dbReference type="InterPro" id="IPR055265">
    <property type="entry name" value="Photo_RC_L/M_CS"/>
</dbReference>
<dbReference type="InterPro" id="IPR005867">
    <property type="entry name" value="PSII_D1"/>
</dbReference>
<dbReference type="NCBIfam" id="TIGR01151">
    <property type="entry name" value="psbA"/>
    <property type="match status" value="1"/>
</dbReference>
<dbReference type="PANTHER" id="PTHR33149:SF12">
    <property type="entry name" value="PHOTOSYSTEM II D2 PROTEIN"/>
    <property type="match status" value="1"/>
</dbReference>
<dbReference type="PANTHER" id="PTHR33149">
    <property type="entry name" value="PHOTOSYSTEM II PROTEIN D1"/>
    <property type="match status" value="1"/>
</dbReference>
<dbReference type="Pfam" id="PF00124">
    <property type="entry name" value="Photo_RC"/>
    <property type="match status" value="1"/>
</dbReference>
<dbReference type="PRINTS" id="PR00256">
    <property type="entry name" value="REACTNCENTRE"/>
</dbReference>
<dbReference type="SUPFAM" id="SSF81483">
    <property type="entry name" value="Bacterial photosystem II reaction centre, L and M subunits"/>
    <property type="match status" value="1"/>
</dbReference>
<dbReference type="PROSITE" id="PS00244">
    <property type="entry name" value="REACTION_CENTER"/>
    <property type="match status" value="1"/>
</dbReference>
<proteinExistence type="inferred from homology"/>
<gene>
    <name evidence="1 2" type="primary">psbA1</name>
    <name type="ordered locus">P9303_04091</name>
</gene>
<gene>
    <name evidence="1 2" type="primary">psbA2</name>
    <name type="ordered locus">P9303_18681</name>
</gene>
<organism>
    <name type="scientific">Prochlorococcus marinus (strain MIT 9303)</name>
    <dbReference type="NCBI Taxonomy" id="59922"/>
    <lineage>
        <taxon>Bacteria</taxon>
        <taxon>Bacillati</taxon>
        <taxon>Cyanobacteriota</taxon>
        <taxon>Cyanophyceae</taxon>
        <taxon>Synechococcales</taxon>
        <taxon>Prochlorococcaceae</taxon>
        <taxon>Prochlorococcus</taxon>
    </lineage>
</organism>
<name>PSBA_PROM3</name>
<sequence length="358" mass="39442">MTTTIRSGRLSSWESFCNWVTSTNNRIYVGWFGVLMVPTLLAAAICFTIAFIAAPPVDIDGIREPVAGSFLYGNNIISGAVVPSSNAIGLHFYPIWEAASVDEWLYNGGPYQLVVFHFLIGICCWLGRQWELSYRLGMRPWICVAYSAPLSAAFAVFLIYPVGQGSFSDGMPLGISGTFNFMLVFQAEHNILMHPFHMIGVAGMFGGSLFSAMHGSLVTSSLIRETTETESQNYGYKFGQEEETYNIVAAHGYFGRLIFQYASFNNSRSLHFFLAAWPVICIWITSLGISTMAFNLNGFNFNQSVLDAQGRVVPTWADVLNRSNLGMEVMHERNAHNFPLDLAAAESTPVALIAPAIG</sequence>
<keyword id="KW-0106">Calcium</keyword>
<keyword id="KW-0148">Chlorophyll</keyword>
<keyword id="KW-0157">Chromophore</keyword>
<keyword id="KW-0249">Electron transport</keyword>
<keyword id="KW-0359">Herbicide resistance</keyword>
<keyword id="KW-0408">Iron</keyword>
<keyword id="KW-0460">Magnesium</keyword>
<keyword id="KW-0464">Manganese</keyword>
<keyword id="KW-0472">Membrane</keyword>
<keyword id="KW-0479">Metal-binding</keyword>
<keyword id="KW-0560">Oxidoreductase</keyword>
<keyword id="KW-0602">Photosynthesis</keyword>
<keyword id="KW-0604">Photosystem II</keyword>
<keyword id="KW-0793">Thylakoid</keyword>
<keyword id="KW-0812">Transmembrane</keyword>
<keyword id="KW-1133">Transmembrane helix</keyword>
<keyword id="KW-0813">Transport</keyword>
<evidence type="ECO:0000255" key="1">
    <source>
        <dbReference type="HAMAP-Rule" id="MF_01379"/>
    </source>
</evidence>
<evidence type="ECO:0000305" key="2"/>
<comment type="function">
    <text evidence="1">Photosystem II (PSII) is a light-driven water:plastoquinone oxidoreductase that uses light energy to abstract electrons from H(2)O, generating O(2) and a proton gradient subsequently used for ATP formation. It consists of a core antenna complex that captures photons, and an electron transfer chain that converts photonic excitation into a charge separation. The D1/D2 (PsbA/PsbD) reaction center heterodimer binds P680, the primary electron donor of PSII as well as several subsequent electron acceptors.</text>
</comment>
<comment type="catalytic activity">
    <reaction evidence="1">
        <text>2 a plastoquinone + 4 hnu + 2 H2O = 2 a plastoquinol + O2</text>
        <dbReference type="Rhea" id="RHEA:36359"/>
        <dbReference type="Rhea" id="RHEA-COMP:9561"/>
        <dbReference type="Rhea" id="RHEA-COMP:9562"/>
        <dbReference type="ChEBI" id="CHEBI:15377"/>
        <dbReference type="ChEBI" id="CHEBI:15379"/>
        <dbReference type="ChEBI" id="CHEBI:17757"/>
        <dbReference type="ChEBI" id="CHEBI:30212"/>
        <dbReference type="ChEBI" id="CHEBI:62192"/>
        <dbReference type="EC" id="1.10.3.9"/>
    </reaction>
</comment>
<comment type="cofactor">
    <text evidence="1">The D1/D2 heterodimer binds P680, chlorophylls that are the primary electron donor of PSII, and subsequent electron acceptors. It shares a non-heme iron and each subunit binds pheophytin, quinone, additional chlorophylls, carotenoids and lipids. D1 provides most of the ligands for the Mn4-Ca-O5 cluster of the oxygen-evolving complex (OEC). There is also a Cl(-1) ion associated with D1 and D2, which is required for oxygen evolution. The PSII complex binds additional chlorophylls, carotenoids and specific lipids.</text>
</comment>
<comment type="subunit">
    <text evidence="2">PSII is composed of 1 copy each of membrane proteins PsbA, PsbB, PsbC, PsbD, PsbE, PsbF, PsbH, PsbI, PsbJ, PsbK, PsbL, PsbM, PsbT, PsbX, PsbY, Psb30/Ycf12, peripheral proteins PsbO, CyanoQ (PsbQ), PsbU, PsbV and a large number of cofactors. It forms dimeric complexes.</text>
</comment>
<comment type="subcellular location">
    <subcellularLocation>
        <location evidence="1">Cellular thylakoid membrane</location>
        <topology evidence="1">Multi-pass membrane protein</topology>
    </subcellularLocation>
</comment>
<comment type="PTM">
    <text evidence="1">Tyr-160 forms a radical intermediate that is referred to as redox-active TyrZ, YZ or Y-Z.</text>
</comment>
<comment type="PTM">
    <text evidence="1">C-terminally processed by CtpA; processing is essential to allow assembly of the oxygen-evolving complex and thus photosynthetic growth.</text>
</comment>
<comment type="miscellaneous">
    <text evidence="1">Cyanobacteria usually contain more than 2 copies of the psbA gene.</text>
</comment>
<comment type="miscellaneous">
    <text evidence="1">2 of the reaction center chlorophylls (ChlD1 and ChlD2) are entirely coordinated by water.</text>
</comment>
<comment type="miscellaneous">
    <text evidence="1">Herbicides such as atrazine, BNT, diuron or ioxynil bind in the Q(B) binding site and block subsequent electron transfer.</text>
</comment>
<comment type="similarity">
    <text evidence="1">Belongs to the reaction center PufL/M/PsbA/D family.</text>
</comment>